<accession>Q94C98</accession>
<accession>O23352</accession>
<accession>Q0WLS5</accession>
<feature type="chain" id="PRO_0000442790" description="Protein PAT1 homolog 2">
    <location>
        <begin position="1"/>
        <end position="787"/>
    </location>
</feature>
<feature type="region of interest" description="Disordered" evidence="2">
    <location>
        <begin position="94"/>
        <end position="120"/>
    </location>
</feature>
<feature type="region of interest" description="Disordered" evidence="2">
    <location>
        <begin position="134"/>
        <end position="221"/>
    </location>
</feature>
<feature type="region of interest" description="Disordered" evidence="2">
    <location>
        <begin position="338"/>
        <end position="374"/>
    </location>
</feature>
<feature type="region of interest" description="Disordered" evidence="2">
    <location>
        <begin position="411"/>
        <end position="445"/>
    </location>
</feature>
<feature type="region of interest" description="Disordered" evidence="2">
    <location>
        <begin position="765"/>
        <end position="787"/>
    </location>
</feature>
<feature type="compositionally biased region" description="Polar residues" evidence="2">
    <location>
        <begin position="105"/>
        <end position="120"/>
    </location>
</feature>
<feature type="compositionally biased region" description="Low complexity" evidence="2">
    <location>
        <begin position="142"/>
        <end position="153"/>
    </location>
</feature>
<feature type="compositionally biased region" description="Polar residues" evidence="2">
    <location>
        <begin position="154"/>
        <end position="171"/>
    </location>
</feature>
<feature type="compositionally biased region" description="Polar residues" evidence="2">
    <location>
        <begin position="180"/>
        <end position="198"/>
    </location>
</feature>
<feature type="compositionally biased region" description="Polar residues" evidence="2">
    <location>
        <begin position="208"/>
        <end position="221"/>
    </location>
</feature>
<feature type="compositionally biased region" description="Basic residues" evidence="2">
    <location>
        <begin position="341"/>
        <end position="353"/>
    </location>
</feature>
<feature type="compositionally biased region" description="Polar residues" evidence="2">
    <location>
        <begin position="355"/>
        <end position="373"/>
    </location>
</feature>
<feature type="compositionally biased region" description="Polar residues" evidence="2">
    <location>
        <begin position="436"/>
        <end position="445"/>
    </location>
</feature>
<feature type="modified residue" description="Phosphoserine" evidence="1">
    <location>
        <position position="184"/>
    </location>
</feature>
<feature type="modified residue" description="Phosphoserine" evidence="1">
    <location>
        <position position="192"/>
    </location>
</feature>
<gene>
    <name evidence="3" type="primary">PAT1H2</name>
    <name evidence="4" type="ordered locus">At4g14990</name>
    <name evidence="5" type="ORF">dl3535c</name>
    <name evidence="6" type="ORF">FCAALL.26</name>
</gene>
<proteinExistence type="evidence at transcript level"/>
<name>PATH2_ARATH</name>
<organism>
    <name type="scientific">Arabidopsis thaliana</name>
    <name type="common">Mouse-ear cress</name>
    <dbReference type="NCBI Taxonomy" id="3702"/>
    <lineage>
        <taxon>Eukaryota</taxon>
        <taxon>Viridiplantae</taxon>
        <taxon>Streptophyta</taxon>
        <taxon>Embryophyta</taxon>
        <taxon>Tracheophyta</taxon>
        <taxon>Spermatophyta</taxon>
        <taxon>Magnoliopsida</taxon>
        <taxon>eudicotyledons</taxon>
        <taxon>Gunneridae</taxon>
        <taxon>Pentapetalae</taxon>
        <taxon>rosids</taxon>
        <taxon>malvids</taxon>
        <taxon>Brassicales</taxon>
        <taxon>Brassicaceae</taxon>
        <taxon>Camelineae</taxon>
        <taxon>Arabidopsis</taxon>
    </lineage>
</organism>
<evidence type="ECO:0000250" key="1">
    <source>
        <dbReference type="UniProtKB" id="Q0WPK4"/>
    </source>
</evidence>
<evidence type="ECO:0000256" key="2">
    <source>
        <dbReference type="SAM" id="MobiDB-lite"/>
    </source>
</evidence>
<evidence type="ECO:0000305" key="3"/>
<evidence type="ECO:0000312" key="4">
    <source>
        <dbReference type="Araport" id="AT4G14990"/>
    </source>
</evidence>
<evidence type="ECO:0000312" key="5">
    <source>
        <dbReference type="EMBL" id="CAB10277.1"/>
    </source>
</evidence>
<evidence type="ECO:0000312" key="6">
    <source>
        <dbReference type="EMBL" id="CAB78541.1"/>
    </source>
</evidence>
<reference key="1">
    <citation type="journal article" date="1998" name="Nature">
        <title>Analysis of 1.9 Mb of contiguous sequence from chromosome 4 of Arabidopsis thaliana.</title>
        <authorList>
            <person name="Bevan M."/>
            <person name="Bancroft I."/>
            <person name="Bent E."/>
            <person name="Love K."/>
            <person name="Goodman H.M."/>
            <person name="Dean C."/>
            <person name="Bergkamp R."/>
            <person name="Dirkse W."/>
            <person name="van Staveren M."/>
            <person name="Stiekema W."/>
            <person name="Drost L."/>
            <person name="Ridley P."/>
            <person name="Hudson S.-A."/>
            <person name="Patel K."/>
            <person name="Murphy G."/>
            <person name="Piffanelli P."/>
            <person name="Wedler H."/>
            <person name="Wedler E."/>
            <person name="Wambutt R."/>
            <person name="Weitzenegger T."/>
            <person name="Pohl T."/>
            <person name="Terryn N."/>
            <person name="Gielen J."/>
            <person name="Villarroel R."/>
            <person name="De Clercq R."/>
            <person name="van Montagu M."/>
            <person name="Lecharny A."/>
            <person name="Aubourg S."/>
            <person name="Gy I."/>
            <person name="Kreis M."/>
            <person name="Lao N."/>
            <person name="Kavanagh T."/>
            <person name="Hempel S."/>
            <person name="Kotter P."/>
            <person name="Entian K.-D."/>
            <person name="Rieger M."/>
            <person name="Schaefer M."/>
            <person name="Funk B."/>
            <person name="Mueller-Auer S."/>
            <person name="Silvey M."/>
            <person name="James R."/>
            <person name="Monfort A."/>
            <person name="Pons A."/>
            <person name="Puigdomenech P."/>
            <person name="Douka A."/>
            <person name="Voukelatou E."/>
            <person name="Milioni D."/>
            <person name="Hatzopoulos P."/>
            <person name="Piravandi E."/>
            <person name="Obermaier B."/>
            <person name="Hilbert H."/>
            <person name="Duesterhoeft A."/>
            <person name="Moores T."/>
            <person name="Jones J.D.G."/>
            <person name="Eneva T."/>
            <person name="Palme K."/>
            <person name="Benes V."/>
            <person name="Rechmann S."/>
            <person name="Ansorge W."/>
            <person name="Cooke R."/>
            <person name="Berger C."/>
            <person name="Delseny M."/>
            <person name="Voet M."/>
            <person name="Volckaert G."/>
            <person name="Mewes H.-W."/>
            <person name="Klosterman S."/>
            <person name="Schueller C."/>
            <person name="Chalwatzis N."/>
        </authorList>
    </citation>
    <scope>NUCLEOTIDE SEQUENCE [LARGE SCALE GENOMIC DNA]</scope>
    <source>
        <strain>cv. Columbia</strain>
    </source>
</reference>
<reference key="2">
    <citation type="journal article" date="1999" name="Nature">
        <title>Sequence and analysis of chromosome 4 of the plant Arabidopsis thaliana.</title>
        <authorList>
            <person name="Mayer K.F.X."/>
            <person name="Schueller C."/>
            <person name="Wambutt R."/>
            <person name="Murphy G."/>
            <person name="Volckaert G."/>
            <person name="Pohl T."/>
            <person name="Duesterhoeft A."/>
            <person name="Stiekema W."/>
            <person name="Entian K.-D."/>
            <person name="Terryn N."/>
            <person name="Harris B."/>
            <person name="Ansorge W."/>
            <person name="Brandt P."/>
            <person name="Grivell L.A."/>
            <person name="Rieger M."/>
            <person name="Weichselgartner M."/>
            <person name="de Simone V."/>
            <person name="Obermaier B."/>
            <person name="Mache R."/>
            <person name="Mueller M."/>
            <person name="Kreis M."/>
            <person name="Delseny M."/>
            <person name="Puigdomenech P."/>
            <person name="Watson M."/>
            <person name="Schmidtheini T."/>
            <person name="Reichert B."/>
            <person name="Portetelle D."/>
            <person name="Perez-Alonso M."/>
            <person name="Boutry M."/>
            <person name="Bancroft I."/>
            <person name="Vos P."/>
            <person name="Hoheisel J."/>
            <person name="Zimmermann W."/>
            <person name="Wedler H."/>
            <person name="Ridley P."/>
            <person name="Langham S.-A."/>
            <person name="McCullagh B."/>
            <person name="Bilham L."/>
            <person name="Robben J."/>
            <person name="van der Schueren J."/>
            <person name="Grymonprez B."/>
            <person name="Chuang Y.-J."/>
            <person name="Vandenbussche F."/>
            <person name="Braeken M."/>
            <person name="Weltjens I."/>
            <person name="Voet M."/>
            <person name="Bastiaens I."/>
            <person name="Aert R."/>
            <person name="Defoor E."/>
            <person name="Weitzenegger T."/>
            <person name="Bothe G."/>
            <person name="Ramsperger U."/>
            <person name="Hilbert H."/>
            <person name="Braun M."/>
            <person name="Holzer E."/>
            <person name="Brandt A."/>
            <person name="Peters S."/>
            <person name="van Staveren M."/>
            <person name="Dirkse W."/>
            <person name="Mooijman P."/>
            <person name="Klein Lankhorst R."/>
            <person name="Rose M."/>
            <person name="Hauf J."/>
            <person name="Koetter P."/>
            <person name="Berneiser S."/>
            <person name="Hempel S."/>
            <person name="Feldpausch M."/>
            <person name="Lamberth S."/>
            <person name="Van den Daele H."/>
            <person name="De Keyser A."/>
            <person name="Buysshaert C."/>
            <person name="Gielen J."/>
            <person name="Villarroel R."/>
            <person name="De Clercq R."/>
            <person name="van Montagu M."/>
            <person name="Rogers J."/>
            <person name="Cronin A."/>
            <person name="Quail M.A."/>
            <person name="Bray-Allen S."/>
            <person name="Clark L."/>
            <person name="Doggett J."/>
            <person name="Hall S."/>
            <person name="Kay M."/>
            <person name="Lennard N."/>
            <person name="McLay K."/>
            <person name="Mayes R."/>
            <person name="Pettett A."/>
            <person name="Rajandream M.A."/>
            <person name="Lyne M."/>
            <person name="Benes V."/>
            <person name="Rechmann S."/>
            <person name="Borkova D."/>
            <person name="Bloecker H."/>
            <person name="Scharfe M."/>
            <person name="Grimm M."/>
            <person name="Loehnert T.-H."/>
            <person name="Dose S."/>
            <person name="de Haan M."/>
            <person name="Maarse A.C."/>
            <person name="Schaefer M."/>
            <person name="Mueller-Auer S."/>
            <person name="Gabel C."/>
            <person name="Fuchs M."/>
            <person name="Fartmann B."/>
            <person name="Granderath K."/>
            <person name="Dauner D."/>
            <person name="Herzl A."/>
            <person name="Neumann S."/>
            <person name="Argiriou A."/>
            <person name="Vitale D."/>
            <person name="Liguori R."/>
            <person name="Piravandi E."/>
            <person name="Massenet O."/>
            <person name="Quigley F."/>
            <person name="Clabauld G."/>
            <person name="Muendlein A."/>
            <person name="Felber R."/>
            <person name="Schnabl S."/>
            <person name="Hiller R."/>
            <person name="Schmidt W."/>
            <person name="Lecharny A."/>
            <person name="Aubourg S."/>
            <person name="Chefdor F."/>
            <person name="Cooke R."/>
            <person name="Berger C."/>
            <person name="Monfort A."/>
            <person name="Casacuberta E."/>
            <person name="Gibbons T."/>
            <person name="Weber N."/>
            <person name="Vandenbol M."/>
            <person name="Bargues M."/>
            <person name="Terol J."/>
            <person name="Torres A."/>
            <person name="Perez-Perez A."/>
            <person name="Purnelle B."/>
            <person name="Bent E."/>
            <person name="Johnson S."/>
            <person name="Tacon D."/>
            <person name="Jesse T."/>
            <person name="Heijnen L."/>
            <person name="Schwarz S."/>
            <person name="Scholler P."/>
            <person name="Heber S."/>
            <person name="Francs P."/>
            <person name="Bielke C."/>
            <person name="Frishman D."/>
            <person name="Haase D."/>
            <person name="Lemcke K."/>
            <person name="Mewes H.-W."/>
            <person name="Stocker S."/>
            <person name="Zaccaria P."/>
            <person name="Bevan M."/>
            <person name="Wilson R.K."/>
            <person name="de la Bastide M."/>
            <person name="Habermann K."/>
            <person name="Parnell L."/>
            <person name="Dedhia N."/>
            <person name="Gnoj L."/>
            <person name="Schutz K."/>
            <person name="Huang E."/>
            <person name="Spiegel L."/>
            <person name="Sekhon M."/>
            <person name="Murray J."/>
            <person name="Sheet P."/>
            <person name="Cordes M."/>
            <person name="Abu-Threideh J."/>
            <person name="Stoneking T."/>
            <person name="Kalicki J."/>
            <person name="Graves T."/>
            <person name="Harmon G."/>
            <person name="Edwards J."/>
            <person name="Latreille P."/>
            <person name="Courtney L."/>
            <person name="Cloud J."/>
            <person name="Abbott A."/>
            <person name="Scott K."/>
            <person name="Johnson D."/>
            <person name="Minx P."/>
            <person name="Bentley D."/>
            <person name="Fulton B."/>
            <person name="Miller N."/>
            <person name="Greco T."/>
            <person name="Kemp K."/>
            <person name="Kramer J."/>
            <person name="Fulton L."/>
            <person name="Mardis E."/>
            <person name="Dante M."/>
            <person name="Pepin K."/>
            <person name="Hillier L.W."/>
            <person name="Nelson J."/>
            <person name="Spieth J."/>
            <person name="Ryan E."/>
            <person name="Andrews S."/>
            <person name="Geisel C."/>
            <person name="Layman D."/>
            <person name="Du H."/>
            <person name="Ali J."/>
            <person name="Berghoff A."/>
            <person name="Jones K."/>
            <person name="Drone K."/>
            <person name="Cotton M."/>
            <person name="Joshu C."/>
            <person name="Antonoiu B."/>
            <person name="Zidanic M."/>
            <person name="Strong C."/>
            <person name="Sun H."/>
            <person name="Lamar B."/>
            <person name="Yordan C."/>
            <person name="Ma P."/>
            <person name="Zhong J."/>
            <person name="Preston R."/>
            <person name="Vil D."/>
            <person name="Shekher M."/>
            <person name="Matero A."/>
            <person name="Shah R."/>
            <person name="Swaby I.K."/>
            <person name="O'Shaughnessy A."/>
            <person name="Rodriguez M."/>
            <person name="Hoffman J."/>
            <person name="Till S."/>
            <person name="Granat S."/>
            <person name="Shohdy N."/>
            <person name="Hasegawa A."/>
            <person name="Hameed A."/>
            <person name="Lodhi M."/>
            <person name="Johnson A."/>
            <person name="Chen E."/>
            <person name="Marra M.A."/>
            <person name="Martienssen R."/>
            <person name="McCombie W.R."/>
        </authorList>
    </citation>
    <scope>NUCLEOTIDE SEQUENCE [LARGE SCALE GENOMIC DNA]</scope>
    <source>
        <strain>cv. Columbia</strain>
    </source>
</reference>
<reference key="3">
    <citation type="journal article" date="2017" name="Plant J.">
        <title>Araport11: a complete reannotation of the Arabidopsis thaliana reference genome.</title>
        <authorList>
            <person name="Cheng C.Y."/>
            <person name="Krishnakumar V."/>
            <person name="Chan A.P."/>
            <person name="Thibaud-Nissen F."/>
            <person name="Schobel S."/>
            <person name="Town C.D."/>
        </authorList>
    </citation>
    <scope>GENOME REANNOTATION</scope>
    <source>
        <strain>cv. Columbia</strain>
    </source>
</reference>
<reference key="4">
    <citation type="journal article" date="2003" name="Science">
        <title>Empirical analysis of transcriptional activity in the Arabidopsis genome.</title>
        <authorList>
            <person name="Yamada K."/>
            <person name="Lim J."/>
            <person name="Dale J.M."/>
            <person name="Chen H."/>
            <person name="Shinn P."/>
            <person name="Palm C.J."/>
            <person name="Southwick A.M."/>
            <person name="Wu H.C."/>
            <person name="Kim C.J."/>
            <person name="Nguyen M."/>
            <person name="Pham P.K."/>
            <person name="Cheuk R.F."/>
            <person name="Karlin-Newmann G."/>
            <person name="Liu S.X."/>
            <person name="Lam B."/>
            <person name="Sakano H."/>
            <person name="Wu T."/>
            <person name="Yu G."/>
            <person name="Miranda M."/>
            <person name="Quach H.L."/>
            <person name="Tripp M."/>
            <person name="Chang C.H."/>
            <person name="Lee J.M."/>
            <person name="Toriumi M.J."/>
            <person name="Chan M.M."/>
            <person name="Tang C.C."/>
            <person name="Onodera C.S."/>
            <person name="Deng J.M."/>
            <person name="Akiyama K."/>
            <person name="Ansari Y."/>
            <person name="Arakawa T."/>
            <person name="Banh J."/>
            <person name="Banno F."/>
            <person name="Bowser L."/>
            <person name="Brooks S.Y."/>
            <person name="Carninci P."/>
            <person name="Chao Q."/>
            <person name="Choy N."/>
            <person name="Enju A."/>
            <person name="Goldsmith A.D."/>
            <person name="Gurjal M."/>
            <person name="Hansen N.F."/>
            <person name="Hayashizaki Y."/>
            <person name="Johnson-Hopson C."/>
            <person name="Hsuan V.W."/>
            <person name="Iida K."/>
            <person name="Karnes M."/>
            <person name="Khan S."/>
            <person name="Koesema E."/>
            <person name="Ishida J."/>
            <person name="Jiang P.X."/>
            <person name="Jones T."/>
            <person name="Kawai J."/>
            <person name="Kamiya A."/>
            <person name="Meyers C."/>
            <person name="Nakajima M."/>
            <person name="Narusaka M."/>
            <person name="Seki M."/>
            <person name="Sakurai T."/>
            <person name="Satou M."/>
            <person name="Tamse R."/>
            <person name="Vaysberg M."/>
            <person name="Wallender E.K."/>
            <person name="Wong C."/>
            <person name="Yamamura Y."/>
            <person name="Yuan S."/>
            <person name="Shinozaki K."/>
            <person name="Davis R.W."/>
            <person name="Theologis A."/>
            <person name="Ecker J.R."/>
        </authorList>
    </citation>
    <scope>NUCLEOTIDE SEQUENCE [LARGE SCALE MRNA]</scope>
    <source>
        <strain>cv. Columbia</strain>
    </source>
</reference>
<reference key="5">
    <citation type="submission" date="2006-07" db="EMBL/GenBank/DDBJ databases">
        <title>Large-scale analysis of RIKEN Arabidopsis full-length (RAFL) cDNAs.</title>
        <authorList>
            <person name="Totoki Y."/>
            <person name="Seki M."/>
            <person name="Ishida J."/>
            <person name="Nakajima M."/>
            <person name="Enju A."/>
            <person name="Kamiya A."/>
            <person name="Narusaka M."/>
            <person name="Shin-i T."/>
            <person name="Nakagawa M."/>
            <person name="Sakamoto N."/>
            <person name="Oishi K."/>
            <person name="Kohara Y."/>
            <person name="Kobayashi M."/>
            <person name="Toyoda A."/>
            <person name="Sakaki Y."/>
            <person name="Sakurai T."/>
            <person name="Iida K."/>
            <person name="Akiyama K."/>
            <person name="Satou M."/>
            <person name="Toyoda T."/>
            <person name="Konagaya A."/>
            <person name="Carninci P."/>
            <person name="Kawai J."/>
            <person name="Hayashizaki Y."/>
            <person name="Shinozaki K."/>
        </authorList>
    </citation>
    <scope>NUCLEOTIDE SEQUENCE [LARGE SCALE MRNA] OF 456-787</scope>
    <source>
        <strain>cv. Columbia</strain>
    </source>
</reference>
<keyword id="KW-0507">mRNA processing</keyword>
<keyword id="KW-0597">Phosphoprotein</keyword>
<keyword id="KW-1185">Reference proteome</keyword>
<dbReference type="EMBL" id="Z97337">
    <property type="protein sequence ID" value="CAB10277.1"/>
    <property type="status" value="ALT_SEQ"/>
    <property type="molecule type" value="Genomic_DNA"/>
</dbReference>
<dbReference type="EMBL" id="AL161540">
    <property type="protein sequence ID" value="CAB78541.1"/>
    <property type="status" value="ALT_SEQ"/>
    <property type="molecule type" value="Genomic_DNA"/>
</dbReference>
<dbReference type="EMBL" id="CP002687">
    <property type="protein sequence ID" value="AEE83534.1"/>
    <property type="molecule type" value="Genomic_DNA"/>
</dbReference>
<dbReference type="EMBL" id="AY035039">
    <property type="protein sequence ID" value="AAK59544.1"/>
    <property type="molecule type" value="mRNA"/>
</dbReference>
<dbReference type="EMBL" id="AK230115">
    <property type="protein sequence ID" value="BAF01932.1"/>
    <property type="molecule type" value="mRNA"/>
</dbReference>
<dbReference type="PIR" id="C71413">
    <property type="entry name" value="C71413"/>
</dbReference>
<dbReference type="RefSeq" id="NP_567452.2">
    <property type="nucleotide sequence ID" value="NM_117586.4"/>
</dbReference>
<dbReference type="ComplexPortal" id="CPX-1399">
    <property type="entry name" value="LSM1-7-PAT1 complex, variant LSM1A-LSM3A-LSM6A-PAT1H2"/>
</dbReference>
<dbReference type="ComplexPortal" id="CPX-1400">
    <property type="entry name" value="LSM1-7-PAT1 complex, variant LSM1A-LSM3A-LSM6B-PAT1H2"/>
</dbReference>
<dbReference type="ComplexPortal" id="CPX-1401">
    <property type="entry name" value="LSM1-7-PAT1 complex, variant LSM1A-LSM3B-LSM6A-PAT1H2"/>
</dbReference>
<dbReference type="ComplexPortal" id="CPX-1402">
    <property type="entry name" value="LSM1-7-PAT1 complex, variant LSM1A-LSM3B-LSM6B-PAT1H2"/>
</dbReference>
<dbReference type="ComplexPortal" id="CPX-1403">
    <property type="entry name" value="LSM1-7-PAT1 complex, variant LSM1B-LSM3A-LSM6A-PAT1H2"/>
</dbReference>
<dbReference type="ComplexPortal" id="CPX-1404">
    <property type="entry name" value="LSM1-7-PAT1 complex, variant LSM1B-LSM3A-LSM6B-PAT1H2"/>
</dbReference>
<dbReference type="ComplexPortal" id="CPX-1405">
    <property type="entry name" value="LSM1-7-PAT1 complex, variant LSM1B-LSM3B-LSM6A-PAT1H2"/>
</dbReference>
<dbReference type="ComplexPortal" id="CPX-1406">
    <property type="entry name" value="LSM1-7-PAT1 complex, variant LSM1B-LSM3B-LSM6B-PAT1H2"/>
</dbReference>
<dbReference type="FunCoup" id="Q94C98">
    <property type="interactions" value="1843"/>
</dbReference>
<dbReference type="STRING" id="3702.Q94C98"/>
<dbReference type="GlyGen" id="Q94C98">
    <property type="glycosylation" value="1 site, 1 O-linked glycan (1 site)"/>
</dbReference>
<dbReference type="iPTMnet" id="Q94C98"/>
<dbReference type="PaxDb" id="3702-AT4G14990.1"/>
<dbReference type="ProteomicsDB" id="226056"/>
<dbReference type="EnsemblPlants" id="AT4G14990.1">
    <property type="protein sequence ID" value="AT4G14990.1"/>
    <property type="gene ID" value="AT4G14990"/>
</dbReference>
<dbReference type="GeneID" id="827158"/>
<dbReference type="Gramene" id="AT4G14990.1">
    <property type="protein sequence ID" value="AT4G14990.1"/>
    <property type="gene ID" value="AT4G14990"/>
</dbReference>
<dbReference type="KEGG" id="ath:AT4G14990"/>
<dbReference type="Araport" id="AT4G14990"/>
<dbReference type="TAIR" id="AT4G14990">
    <property type="gene designation" value="PAT1H2"/>
</dbReference>
<dbReference type="eggNOG" id="ENOG502QQ60">
    <property type="taxonomic scope" value="Eukaryota"/>
</dbReference>
<dbReference type="HOGENOM" id="CLU_021130_0_0_1"/>
<dbReference type="InParanoid" id="Q94C98"/>
<dbReference type="OMA" id="DYYYQAR"/>
<dbReference type="PhylomeDB" id="Q94C98"/>
<dbReference type="PRO" id="PR:Q94C98"/>
<dbReference type="Proteomes" id="UP000006548">
    <property type="component" value="Chromosome 4"/>
</dbReference>
<dbReference type="ExpressionAtlas" id="Q94C98">
    <property type="expression patterns" value="baseline and differential"/>
</dbReference>
<dbReference type="GO" id="GO:1990726">
    <property type="term" value="C:Lsm1-7-Pat1 complex"/>
    <property type="evidence" value="ECO:0000303"/>
    <property type="project" value="ComplexPortal"/>
</dbReference>
<dbReference type="GO" id="GO:0000932">
    <property type="term" value="C:P-body"/>
    <property type="evidence" value="ECO:0000303"/>
    <property type="project" value="ComplexPortal"/>
</dbReference>
<dbReference type="GO" id="GO:0003729">
    <property type="term" value="F:mRNA binding"/>
    <property type="evidence" value="ECO:0007005"/>
    <property type="project" value="TAIR"/>
</dbReference>
<dbReference type="GO" id="GO:0000290">
    <property type="term" value="P:deadenylation-dependent decapping of nuclear-transcribed mRNA"/>
    <property type="evidence" value="ECO:0000269"/>
    <property type="project" value="ComplexPortal"/>
</dbReference>
<dbReference type="GO" id="GO:0006397">
    <property type="term" value="P:mRNA processing"/>
    <property type="evidence" value="ECO:0007669"/>
    <property type="project" value="UniProtKB-KW"/>
</dbReference>
<dbReference type="InterPro" id="IPR039900">
    <property type="entry name" value="Pat1-like"/>
</dbReference>
<dbReference type="PANTHER" id="PTHR21551:SF24">
    <property type="entry name" value="PROTEIN PAT1 HOMOLOG 2"/>
    <property type="match status" value="1"/>
</dbReference>
<dbReference type="PANTHER" id="PTHR21551">
    <property type="entry name" value="TOPOISOMERASE II-ASSOCIATED PROTEIN PAT1"/>
    <property type="match status" value="1"/>
</dbReference>
<comment type="function">
    <text evidence="1">Activator of mRNA decapping. Involved in mRNA decay via decapping.</text>
</comment>
<comment type="sequence caution" evidence="3">
    <conflict type="erroneous gene model prediction">
        <sequence resource="EMBL-CDS" id="CAB10277"/>
    </conflict>
</comment>
<comment type="sequence caution" evidence="3">
    <conflict type="erroneous gene model prediction">
        <sequence resource="EMBL-CDS" id="CAB78541"/>
    </conflict>
</comment>
<sequence>MERSDSRDFYNFAKTSSDNNSALFDASQYEFFGQSLEEVELGGLDDDGTVRGHVDDEEYHLFDKREGAGLGSLSDMDDLATTFAKLNRNVTGPKHLGVIGDRGSGSFSRESSTATDWTQDNEFTSWLDQHTVEEQVQEASWSSQPQSSPNSNSLYRTSSYPQQQTQLQHYSSEPIIVPESTFTSFPSPGKRSQQSSPSHIHRAPSLPGGSQSNFSAPNASPLSNSTFHLSGLSHGPSHYGNNLARYASCGPTLGNMVQQPPHWVTDPGLLHGDHSALLHSLMQQQHLQQLPPRNGFTSQQLISLQQRQSLAHLAALQSQLYSSYPSPSHKALFGVGEVREHKHKSSHRSRKNRGGISQQTSDLASQKSESGLQFRSKYMTSEEIESILKMQHSNSHSSDPYVNDYYHQARLAKKSSGSRTKPQLYPSHLKDHQSRSRNSSDQQPQVHVDALGKITLPSICRPRALLEVDSPPSSGHKHLEDEPLVAARVTIEDAFGVLIDIVDIDRTLQFNRPQDGGAQLRRKRQILLEGLATSLQLVDPFSKTGQKTGLTTKDDIVFLRITTLPKGRKLLTKYLQLLVPGTEIARVVCMAVFRHLRFLFGGLPSDSLAAETIANLAKAVTVCVQAMDLRALSACLAAVVCSSEQPPLRPIGSSSGDGASVVLVSLLERAAEVIVAVVPPRVSNHGNPNDGLWRASFDEFFSLLTKYCRSKYETIHGQNHDNAADVLELAIKREMPAELLRASLRHTNEDQRNFLLNVGRSASPVSESTTTRASASGGQINSEFVRG</sequence>
<protein>
    <recommendedName>
        <fullName evidence="3">Protein PAT1 homolog 2</fullName>
        <shortName evidence="3">AtPAT1H2</shortName>
    </recommendedName>
</protein>